<organism>
    <name type="scientific">Lonomia obliqua</name>
    <name type="common">Moth</name>
    <dbReference type="NCBI Taxonomy" id="304329"/>
    <lineage>
        <taxon>Eukaryota</taxon>
        <taxon>Metazoa</taxon>
        <taxon>Ecdysozoa</taxon>
        <taxon>Arthropoda</taxon>
        <taxon>Hexapoda</taxon>
        <taxon>Insecta</taxon>
        <taxon>Pterygota</taxon>
        <taxon>Neoptera</taxon>
        <taxon>Endopterygota</taxon>
        <taxon>Lepidoptera</taxon>
        <taxon>Glossata</taxon>
        <taxon>Ditrysia</taxon>
        <taxon>Bombycoidea</taxon>
        <taxon>Saturniidae</taxon>
        <taxon>Hemileucinae</taxon>
        <taxon>Lonomia</taxon>
    </lineage>
</organism>
<protein>
    <recommendedName>
        <fullName>Unknown protein 3</fullName>
    </recommendedName>
</protein>
<evidence type="ECO:0000269" key="1">
    <source>
    </source>
</evidence>
<evidence type="ECO:0000303" key="2">
    <source>
    </source>
</evidence>
<evidence type="ECO:0000305" key="3"/>
<sequence length="18" mass="2126">YEYSVYREIIGSGHIIAR</sequence>
<accession>P85248</accession>
<proteinExistence type="evidence at protein level"/>
<feature type="chain" id="PRO_0000302102" description="Unknown protein 3">
    <location>
        <begin position="1" status="less than"/>
        <end position="18" status="greater than"/>
    </location>
</feature>
<feature type="unsure residue" description="I or L" evidence="1">
    <location>
        <position position="9"/>
    </location>
</feature>
<feature type="unsure residue" description="I or L" evidence="1">
    <location>
        <position position="10"/>
    </location>
</feature>
<feature type="unsure residue" description="I or L" evidence="1">
    <location>
        <position position="15"/>
    </location>
</feature>
<feature type="unsure residue" description="I or L" evidence="1">
    <location>
        <position position="16"/>
    </location>
</feature>
<feature type="non-consecutive residues" evidence="2">
    <location>
        <begin position="7"/>
        <end position="8"/>
    </location>
</feature>
<feature type="non-terminal residue" evidence="2">
    <location>
        <position position="1"/>
    </location>
</feature>
<feature type="non-terminal residue" evidence="2">
    <location>
        <position position="18"/>
    </location>
</feature>
<name>UP03_LONON</name>
<keyword id="KW-0903">Direct protein sequencing</keyword>
<reference evidence="3" key="1">
    <citation type="journal article" date="2008" name="Toxicon">
        <title>Immunochemical and proteomic technologies as tools for unravelling toxins involved in envenoming by accidental contact with Lonomia obliqua caterpillars.</title>
        <authorList>
            <person name="Ricci-Silva M.E."/>
            <person name="Valente R.H."/>
            <person name="Leon I.R."/>
            <person name="Tambourgi D.V."/>
            <person name="Ramos O.H.P."/>
            <person name="Perales J."/>
            <person name="Chudzinski-Tavassi A.M."/>
        </authorList>
    </citation>
    <scope>PROTEIN SEQUENCE</scope>
    <source>
        <tissue evidence="1">Larval bristle</tissue>
    </source>
</reference>
<comment type="caution">
    <text evidence="1">The order of the peptides shown is unknown.</text>
</comment>